<keyword id="KW-0175">Coiled coil</keyword>
<keyword id="KW-0325">Glycoprotein</keyword>
<keyword id="KW-0378">Hydrolase</keyword>
<keyword id="KW-0442">Lipid degradation</keyword>
<keyword id="KW-0443">Lipid metabolism</keyword>
<keyword id="KW-0611">Plant defense</keyword>
<keyword id="KW-1185">Reference proteome</keyword>
<keyword id="KW-0732">Signal</keyword>
<keyword id="KW-0758">Storage protein</keyword>
<keyword id="KW-0926">Vacuole</keyword>
<evidence type="ECO:0000250" key="1"/>
<evidence type="ECO:0000255" key="2"/>
<evidence type="ECO:0000255" key="3">
    <source>
        <dbReference type="PROSITE-ProRule" id="PRU01161"/>
    </source>
</evidence>
<evidence type="ECO:0000269" key="4">
    <source>
    </source>
</evidence>
<evidence type="ECO:0000305" key="5"/>
<proteinExistence type="evidence at transcript level"/>
<organism>
    <name type="scientific">Solanum tuberosum</name>
    <name type="common">Potato</name>
    <dbReference type="NCBI Taxonomy" id="4113"/>
    <lineage>
        <taxon>Eukaryota</taxon>
        <taxon>Viridiplantae</taxon>
        <taxon>Streptophyta</taxon>
        <taxon>Embryophyta</taxon>
        <taxon>Tracheophyta</taxon>
        <taxon>Spermatophyta</taxon>
        <taxon>Magnoliopsida</taxon>
        <taxon>eudicotyledons</taxon>
        <taxon>Gunneridae</taxon>
        <taxon>Pentapetalae</taxon>
        <taxon>asterids</taxon>
        <taxon>lamiids</taxon>
        <taxon>Solanales</taxon>
        <taxon>Solanaceae</taxon>
        <taxon>Solanoideae</taxon>
        <taxon>Solaneae</taxon>
        <taxon>Solanum</taxon>
    </lineage>
</organism>
<accession>Q2MY38</accession>
<reference key="1">
    <citation type="journal article" date="2006" name="Genetics">
        <title>Structural diversity and differential transcription of the patatin multicopy gene family during potato tuber development.</title>
        <authorList>
            <person name="Stupar R.M."/>
            <person name="Beaubien K.A."/>
            <person name="Jin W."/>
            <person name="Song J."/>
            <person name="Lee M.-K."/>
            <person name="Wu C."/>
            <person name="Zhang H.-B."/>
            <person name="Han B."/>
            <person name="Jiang J."/>
        </authorList>
    </citation>
    <scope>NUCLEOTIDE SEQUENCE [MRNA]</scope>
    <scope>DEVELOPMENTAL STAGE</scope>
    <scope>TISSUE SPECIFICITY</scope>
    <source>
        <strain>cv. Kennebec</strain>
    </source>
</reference>
<sequence length="387" mass="42424">MATTKSVLVLIFMILATTSSTFATLGEMVTVLSVDGGGIKGIIPGIILEFLEGQLQKMDNNADARLADYFDVIGGTSTGGLLTAMITTPNENNRPFAAAKDIVPFYFQHGPHIFNSSTGQFFGPKYDGKYLMQVPQEKLGETRVHQALTEVAISSFDIKTNKPVIFTKSNLAKSPELDAKMSDICYSTAAAPTYFPPHYFATNTSNGDKYEFNLVDGAVATVADPALLSVSVATRRAEEDPAFASIRSLNYKQLLLLSLGTGTNSEFDKTHTAQETAKWGALQWMLVIQQMTEAASSYMTDYYLSTVFQDLHSQNNYLRVQENALTGTTTKADDASEANMELLVQVGETLLKKPVSKDSPETYEEALKRFAKLLSDRKKLRANKASY</sequence>
<comment type="function">
    <text evidence="1">Probable lipolytic acyl hydrolase (LAH), an activity which is thought to be involved in the response of tubers to pathogens.</text>
</comment>
<comment type="subcellular location">
    <subcellularLocation>
        <location evidence="1">Vacuole</location>
    </subcellularLocation>
</comment>
<comment type="tissue specificity">
    <text evidence="4">Tuber.</text>
</comment>
<comment type="developmental stage">
    <text evidence="4">Accumulates progressively during tuber formation from stolon.</text>
</comment>
<comment type="domain">
    <text>The nitrogen atoms of the two glycine residues in the GGXR motif define the oxyanion hole, and stabilize the oxyanion that forms during the nucleophilic attack by the catalytic serine during substrate cleavage.</text>
</comment>
<comment type="miscellaneous">
    <text>Patatin have a dual role as a somatic storage protein and as an enzyme involved in host resistance.</text>
</comment>
<comment type="similarity">
    <text evidence="5">Belongs to the patatin family.</text>
</comment>
<protein>
    <recommendedName>
        <fullName>Patatin-13</fullName>
        <ecNumber>3.1.1.-</ecNumber>
    </recommendedName>
</protein>
<feature type="signal peptide" evidence="2">
    <location>
        <begin position="1"/>
        <end position="23"/>
    </location>
</feature>
<feature type="chain" id="PRO_0000296698" description="Patatin-13">
    <location>
        <begin position="24"/>
        <end position="387"/>
    </location>
</feature>
<feature type="domain" description="PNPLA" evidence="3">
    <location>
        <begin position="32"/>
        <end position="230"/>
    </location>
</feature>
<feature type="coiled-coil region" evidence="2">
    <location>
        <begin position="361"/>
        <end position="385"/>
    </location>
</feature>
<feature type="short sequence motif" description="GXGXXG" evidence="3">
    <location>
        <begin position="36"/>
        <end position="41"/>
    </location>
</feature>
<feature type="short sequence motif" description="GXSXG" evidence="3">
    <location>
        <begin position="75"/>
        <end position="79"/>
    </location>
</feature>
<feature type="short sequence motif" description="DGA/G" evidence="3">
    <location>
        <begin position="216"/>
        <end position="218"/>
    </location>
</feature>
<feature type="active site" description="Nucleophile" evidence="3">
    <location>
        <position position="77"/>
    </location>
</feature>
<feature type="active site" description="Proton acceptor" evidence="3">
    <location>
        <position position="216"/>
    </location>
</feature>
<feature type="glycosylation site" description="N-linked (GlcNAc...) asparagine" evidence="2">
    <location>
        <position position="115"/>
    </location>
</feature>
<feature type="glycosylation site" description="N-linked (GlcNAc...) asparagine" evidence="2">
    <location>
        <position position="203"/>
    </location>
</feature>
<dbReference type="EC" id="3.1.1.-"/>
<dbReference type="EMBL" id="DQ274500">
    <property type="protein sequence ID" value="ABC55700.1"/>
    <property type="molecule type" value="mRNA"/>
</dbReference>
<dbReference type="RefSeq" id="NP_001275345.1">
    <property type="nucleotide sequence ID" value="NM_001288416.1"/>
</dbReference>
<dbReference type="SMR" id="Q2MY38"/>
<dbReference type="STRING" id="4113.Q2MY38"/>
<dbReference type="GeneID" id="102605260"/>
<dbReference type="KEGG" id="sot:102605260"/>
<dbReference type="InParanoid" id="Q2MY38"/>
<dbReference type="OrthoDB" id="1288539at2759"/>
<dbReference type="Proteomes" id="UP000011115">
    <property type="component" value="Unassembled WGS sequence"/>
</dbReference>
<dbReference type="ExpressionAtlas" id="Q2MY38">
    <property type="expression patterns" value="baseline and differential"/>
</dbReference>
<dbReference type="GO" id="GO:0005773">
    <property type="term" value="C:vacuole"/>
    <property type="evidence" value="ECO:0007669"/>
    <property type="project" value="UniProtKB-SubCell"/>
</dbReference>
<dbReference type="GO" id="GO:0047372">
    <property type="term" value="F:monoacylglycerol lipase activity"/>
    <property type="evidence" value="ECO:0000318"/>
    <property type="project" value="GO_Central"/>
</dbReference>
<dbReference type="GO" id="GO:0045735">
    <property type="term" value="F:nutrient reservoir activity"/>
    <property type="evidence" value="ECO:0007669"/>
    <property type="project" value="UniProtKB-KW"/>
</dbReference>
<dbReference type="GO" id="GO:0004620">
    <property type="term" value="F:phospholipase activity"/>
    <property type="evidence" value="ECO:0000318"/>
    <property type="project" value="GO_Central"/>
</dbReference>
<dbReference type="GO" id="GO:0006952">
    <property type="term" value="P:defense response"/>
    <property type="evidence" value="ECO:0007669"/>
    <property type="project" value="UniProtKB-KW"/>
</dbReference>
<dbReference type="GO" id="GO:0016042">
    <property type="term" value="P:lipid catabolic process"/>
    <property type="evidence" value="ECO:0007669"/>
    <property type="project" value="UniProtKB-KW"/>
</dbReference>
<dbReference type="Gene3D" id="3.40.1090.10">
    <property type="entry name" value="Cytosolic phospholipase A2 catalytic domain"/>
    <property type="match status" value="1"/>
</dbReference>
<dbReference type="InterPro" id="IPR016035">
    <property type="entry name" value="Acyl_Trfase/lysoPLipase"/>
</dbReference>
<dbReference type="InterPro" id="IPR002641">
    <property type="entry name" value="PNPLA_dom"/>
</dbReference>
<dbReference type="PANTHER" id="PTHR32176:SF85">
    <property type="entry name" value="PATATIN GROUP D-2"/>
    <property type="match status" value="1"/>
</dbReference>
<dbReference type="PANTHER" id="PTHR32176">
    <property type="entry name" value="XYLOSE ISOMERASE"/>
    <property type="match status" value="1"/>
</dbReference>
<dbReference type="Pfam" id="PF01734">
    <property type="entry name" value="Patatin"/>
    <property type="match status" value="1"/>
</dbReference>
<dbReference type="SUPFAM" id="SSF52151">
    <property type="entry name" value="FabD/lysophospholipase-like"/>
    <property type="match status" value="1"/>
</dbReference>
<dbReference type="PROSITE" id="PS51635">
    <property type="entry name" value="PNPLA"/>
    <property type="match status" value="1"/>
</dbReference>
<name>PAT13_SOLTU</name>